<name>CYOC_PSEPU</name>
<feature type="chain" id="PRO_0000183899" description="Cytochrome bo(3) ubiquinol oxidase subunit 3">
    <location>
        <begin position="1"/>
        <end position="207"/>
    </location>
</feature>
<feature type="topological domain" description="Cytoplasmic" evidence="2">
    <location>
        <begin position="1"/>
        <end position="26"/>
    </location>
</feature>
<feature type="transmembrane region" description="Helical" evidence="2">
    <location>
        <begin position="27"/>
        <end position="47"/>
    </location>
</feature>
<feature type="topological domain" description="Periplasmic" evidence="2">
    <location>
        <begin position="48"/>
        <end position="70"/>
    </location>
</feature>
<feature type="transmembrane region" description="Helical" evidence="2">
    <location>
        <begin position="71"/>
        <end position="91"/>
    </location>
</feature>
<feature type="topological domain" description="Cytoplasmic" evidence="2">
    <location>
        <begin position="92"/>
        <end position="99"/>
    </location>
</feature>
<feature type="transmembrane region" description="Helical" evidence="2">
    <location>
        <begin position="100"/>
        <end position="120"/>
    </location>
</feature>
<feature type="topological domain" description="Periplasmic" evidence="2">
    <location>
        <begin position="121"/>
        <end position="141"/>
    </location>
</feature>
<feature type="transmembrane region" description="Helical" evidence="2">
    <location>
        <begin position="142"/>
        <end position="162"/>
    </location>
</feature>
<feature type="topological domain" description="Cytoplasmic" evidence="2">
    <location>
        <begin position="163"/>
        <end position="185"/>
    </location>
</feature>
<feature type="transmembrane region" description="Helical" evidence="2">
    <location>
        <begin position="186"/>
        <end position="206"/>
    </location>
</feature>
<feature type="topological domain" description="Periplasmic" evidence="2">
    <location>
        <position position="207"/>
    </location>
</feature>
<reference key="1">
    <citation type="journal article" date="1998" name="FEMS Microbiol. Lett.">
        <title>Isolation and characterization of toluene-sensitive mutants from Pseudomonas putida IH-2000.</title>
        <authorList>
            <person name="Hirayama H."/>
            <person name="Takami H."/>
            <person name="Inoue A."/>
            <person name="Horikoshi K."/>
        </authorList>
    </citation>
    <scope>NUCLEOTIDE SEQUENCE [GENOMIC DNA]</scope>
    <source>
        <strain>IH-2000</strain>
    </source>
</reference>
<accession>Q9WWR3</accession>
<comment type="function">
    <text evidence="1">Cytochrome bo(3) ubiquinol terminal oxidase is the component of the aerobic respiratory chain of E.coli that predominates when cells are grown at high aeration. Has proton pump activity across the membrane in addition to electron transfer, pumping 2 protons/electron (By similarity).</text>
</comment>
<comment type="subunit">
    <text evidence="1">Heterooctamer of two A chains, two B chains, two C chains and two D chains.</text>
</comment>
<comment type="subcellular location">
    <subcellularLocation>
        <location evidence="1">Cell inner membrane</location>
        <topology evidence="1">Multi-pass membrane protein</topology>
    </subcellularLocation>
</comment>
<comment type="similarity">
    <text evidence="3">Belongs to the cytochrome c oxidase subunit 3 family.</text>
</comment>
<dbReference type="EMBL" id="AB016787">
    <property type="protein sequence ID" value="BAA76358.1"/>
    <property type="molecule type" value="Genomic_DNA"/>
</dbReference>
<dbReference type="RefSeq" id="WP_025337745.1">
    <property type="nucleotide sequence ID" value="NZ_JAPYLM010000001.1"/>
</dbReference>
<dbReference type="SMR" id="Q9WWR3"/>
<dbReference type="eggNOG" id="COG1845">
    <property type="taxonomic scope" value="Bacteria"/>
</dbReference>
<dbReference type="GO" id="GO:0005886">
    <property type="term" value="C:plasma membrane"/>
    <property type="evidence" value="ECO:0007669"/>
    <property type="project" value="UniProtKB-SubCell"/>
</dbReference>
<dbReference type="GO" id="GO:0009486">
    <property type="term" value="F:cytochrome bo3 ubiquinol oxidase activity"/>
    <property type="evidence" value="ECO:0007669"/>
    <property type="project" value="InterPro"/>
</dbReference>
<dbReference type="GO" id="GO:0004129">
    <property type="term" value="F:cytochrome-c oxidase activity"/>
    <property type="evidence" value="ECO:0007669"/>
    <property type="project" value="InterPro"/>
</dbReference>
<dbReference type="GO" id="GO:0019646">
    <property type="term" value="P:aerobic electron transport chain"/>
    <property type="evidence" value="ECO:0007669"/>
    <property type="project" value="InterPro"/>
</dbReference>
<dbReference type="CDD" id="cd02863">
    <property type="entry name" value="Ubiquinol_oxidase_III"/>
    <property type="match status" value="1"/>
</dbReference>
<dbReference type="FunFam" id="1.20.120.80:FF:000001">
    <property type="entry name" value="Cytochrome (Ubi)quinol oxidase subunit III"/>
    <property type="match status" value="1"/>
</dbReference>
<dbReference type="Gene3D" id="1.20.120.80">
    <property type="entry name" value="Cytochrome c oxidase, subunit III, four-helix bundle"/>
    <property type="match status" value="1"/>
</dbReference>
<dbReference type="InterPro" id="IPR024791">
    <property type="entry name" value="Cyt_c/ubiquinol_Oxase_su3"/>
</dbReference>
<dbReference type="InterPro" id="IPR000298">
    <property type="entry name" value="Cyt_c_oxidase-like_su3"/>
</dbReference>
<dbReference type="InterPro" id="IPR035973">
    <property type="entry name" value="Cyt_c_oxidase_su3-like_sf"/>
</dbReference>
<dbReference type="InterPro" id="IPR013833">
    <property type="entry name" value="Cyt_c_oxidase_su3_a-hlx"/>
</dbReference>
<dbReference type="InterPro" id="IPR014206">
    <property type="entry name" value="Cyt_c_ubiqinol_oxidase_su3"/>
</dbReference>
<dbReference type="InterPro" id="IPR033946">
    <property type="entry name" value="Ubiquinol_oxase_su3_dom"/>
</dbReference>
<dbReference type="NCBIfam" id="TIGR02842">
    <property type="entry name" value="CyoC"/>
    <property type="match status" value="1"/>
</dbReference>
<dbReference type="PANTHER" id="PTHR11403:SF2">
    <property type="entry name" value="CYTOCHROME BO(3) UBIQUINOL OXIDASE SUBUNIT 3"/>
    <property type="match status" value="1"/>
</dbReference>
<dbReference type="PANTHER" id="PTHR11403">
    <property type="entry name" value="CYTOCHROME C OXIDASE SUBUNIT III"/>
    <property type="match status" value="1"/>
</dbReference>
<dbReference type="Pfam" id="PF00510">
    <property type="entry name" value="COX3"/>
    <property type="match status" value="1"/>
</dbReference>
<dbReference type="SUPFAM" id="SSF81452">
    <property type="entry name" value="Cytochrome c oxidase subunit III-like"/>
    <property type="match status" value="1"/>
</dbReference>
<dbReference type="PROSITE" id="PS50253">
    <property type="entry name" value="COX3"/>
    <property type="match status" value="1"/>
</dbReference>
<protein>
    <recommendedName>
        <fullName>Cytochrome bo(3) ubiquinol oxidase subunit 3</fullName>
    </recommendedName>
    <alternativeName>
        <fullName>Cytochrome o ubiquinol oxidase subunit 3</fullName>
        <shortName>Cytochrome o subunit 3</shortName>
    </alternativeName>
    <alternativeName>
        <fullName>Oxidase bo(3) subunit 3</fullName>
    </alternativeName>
    <alternativeName>
        <fullName>Ubiquinol oxidase polypeptide III</fullName>
    </alternativeName>
    <alternativeName>
        <fullName>Ubiquinol oxidase subunit 3</fullName>
    </alternativeName>
</protein>
<keyword id="KW-0997">Cell inner membrane</keyword>
<keyword id="KW-1003">Cell membrane</keyword>
<keyword id="KW-0249">Electron transport</keyword>
<keyword id="KW-0472">Membrane</keyword>
<keyword id="KW-0560">Oxidoreductase</keyword>
<keyword id="KW-0812">Transmembrane</keyword>
<keyword id="KW-1133">Transmembrane helix</keyword>
<keyword id="KW-0813">Transport</keyword>
<evidence type="ECO:0000250" key="1"/>
<evidence type="ECO:0000255" key="2"/>
<evidence type="ECO:0000305" key="3"/>
<organism>
    <name type="scientific">Pseudomonas putida</name>
    <name type="common">Arthrobacter siderocapsulatus</name>
    <dbReference type="NCBI Taxonomy" id="303"/>
    <lineage>
        <taxon>Bacteria</taxon>
        <taxon>Pseudomonadati</taxon>
        <taxon>Pseudomonadota</taxon>
        <taxon>Gammaproteobacteria</taxon>
        <taxon>Pseudomonadales</taxon>
        <taxon>Pseudomonadaceae</taxon>
        <taxon>Pseudomonas</taxon>
    </lineage>
</organism>
<gene>
    <name type="primary">cyoC</name>
</gene>
<proteinExistence type="inferred from homology"/>
<sequence length="207" mass="22814">MSSQVMHGAAHGHDHGHDDHHHDSGQMTVLGFWLYLMTDCILFASLFATYAVLSGSFAGGPSGHDIFQLDFVAVETLFLLLSSITFGFAMLKMFDGKKAGVLGWLAVTFLFGAGFIAMEIYEFHHLIAEGFGPQRSGFLSGFFALVGTHGLHVTAGLIWMAIMMYQINKHGITPTAKTRMSCLSLFWHFLDVVWICVFTVVYLLGVL</sequence>